<gene>
    <name evidence="1" type="primary">trpF</name>
    <name type="ordered locus">SPN23F18330</name>
</gene>
<accession>B8ZN60</accession>
<feature type="chain" id="PRO_1000197125" description="N-(5'-phosphoribosyl)anthranilate isomerase">
    <location>
        <begin position="1"/>
        <end position="199"/>
    </location>
</feature>
<comment type="catalytic activity">
    <reaction evidence="1">
        <text>N-(5-phospho-beta-D-ribosyl)anthranilate = 1-(2-carboxyphenylamino)-1-deoxy-D-ribulose 5-phosphate</text>
        <dbReference type="Rhea" id="RHEA:21540"/>
        <dbReference type="ChEBI" id="CHEBI:18277"/>
        <dbReference type="ChEBI" id="CHEBI:58613"/>
        <dbReference type="EC" id="5.3.1.24"/>
    </reaction>
</comment>
<comment type="pathway">
    <text evidence="1">Amino-acid biosynthesis; L-tryptophan biosynthesis; L-tryptophan from chorismate: step 3/5.</text>
</comment>
<comment type="similarity">
    <text evidence="1">Belongs to the TrpF family.</text>
</comment>
<name>TRPF_STRPJ</name>
<protein>
    <recommendedName>
        <fullName evidence="1">N-(5'-phosphoribosyl)anthranilate isomerase</fullName>
        <shortName evidence="1">PRAI</shortName>
        <ecNumber evidence="1">5.3.1.24</ecNumber>
    </recommendedName>
</protein>
<proteinExistence type="inferred from homology"/>
<sequence>MTKVKICGLSTKEAVETAVSAGADYIGFVFAPSKRQVTLEEAAELAKLIPADVKKVGVFVSPSRVELLEAIDKVGLDLVQVHGQVAADLFENLPCASIQAVQVDGNGHVPNSQADYLLFDAPVAGSGQSFDWGQLDTTGLAQPFFIAGGLNEDNVVKAIQHFTPYAVDVSSGVETDGQKNHEKIRRFIERVKHGISGTK</sequence>
<keyword id="KW-0028">Amino-acid biosynthesis</keyword>
<keyword id="KW-0057">Aromatic amino acid biosynthesis</keyword>
<keyword id="KW-0413">Isomerase</keyword>
<keyword id="KW-0822">Tryptophan biosynthesis</keyword>
<evidence type="ECO:0000255" key="1">
    <source>
        <dbReference type="HAMAP-Rule" id="MF_00135"/>
    </source>
</evidence>
<reference key="1">
    <citation type="journal article" date="2009" name="J. Bacteriol.">
        <title>Role of conjugative elements in the evolution of the multidrug-resistant pandemic clone Streptococcus pneumoniae Spain23F ST81.</title>
        <authorList>
            <person name="Croucher N.J."/>
            <person name="Walker D."/>
            <person name="Romero P."/>
            <person name="Lennard N."/>
            <person name="Paterson G.K."/>
            <person name="Bason N.C."/>
            <person name="Mitchell A.M."/>
            <person name="Quail M.A."/>
            <person name="Andrew P.W."/>
            <person name="Parkhill J."/>
            <person name="Bentley S.D."/>
            <person name="Mitchell T.J."/>
        </authorList>
    </citation>
    <scope>NUCLEOTIDE SEQUENCE [LARGE SCALE GENOMIC DNA]</scope>
    <source>
        <strain>ATCC 700669 / Spain 23F-1</strain>
    </source>
</reference>
<dbReference type="EC" id="5.3.1.24" evidence="1"/>
<dbReference type="EMBL" id="FM211187">
    <property type="protein sequence ID" value="CAR69597.1"/>
    <property type="molecule type" value="Genomic_DNA"/>
</dbReference>
<dbReference type="RefSeq" id="WP_000169888.1">
    <property type="nucleotide sequence ID" value="NC_011900.1"/>
</dbReference>
<dbReference type="SMR" id="B8ZN60"/>
<dbReference type="KEGG" id="sne:SPN23F18330"/>
<dbReference type="HOGENOM" id="CLU_076364_1_0_9"/>
<dbReference type="UniPathway" id="UPA00035">
    <property type="reaction ID" value="UER00042"/>
</dbReference>
<dbReference type="GO" id="GO:0004640">
    <property type="term" value="F:phosphoribosylanthranilate isomerase activity"/>
    <property type="evidence" value="ECO:0007669"/>
    <property type="project" value="UniProtKB-UniRule"/>
</dbReference>
<dbReference type="GO" id="GO:0000162">
    <property type="term" value="P:L-tryptophan biosynthetic process"/>
    <property type="evidence" value="ECO:0007669"/>
    <property type="project" value="UniProtKB-UniRule"/>
</dbReference>
<dbReference type="CDD" id="cd00405">
    <property type="entry name" value="PRAI"/>
    <property type="match status" value="1"/>
</dbReference>
<dbReference type="FunFam" id="3.20.20.70:FF:000075">
    <property type="entry name" value="Tryptophan biosynthesis protein TRP1"/>
    <property type="match status" value="1"/>
</dbReference>
<dbReference type="Gene3D" id="3.20.20.70">
    <property type="entry name" value="Aldolase class I"/>
    <property type="match status" value="1"/>
</dbReference>
<dbReference type="HAMAP" id="MF_00135">
    <property type="entry name" value="PRAI"/>
    <property type="match status" value="1"/>
</dbReference>
<dbReference type="InterPro" id="IPR013785">
    <property type="entry name" value="Aldolase_TIM"/>
</dbReference>
<dbReference type="InterPro" id="IPR001240">
    <property type="entry name" value="PRAI_dom"/>
</dbReference>
<dbReference type="InterPro" id="IPR011060">
    <property type="entry name" value="RibuloseP-bd_barrel"/>
</dbReference>
<dbReference type="InterPro" id="IPR044643">
    <property type="entry name" value="TrpF_fam"/>
</dbReference>
<dbReference type="NCBIfam" id="NF002300">
    <property type="entry name" value="PRK01222.1-7"/>
    <property type="match status" value="1"/>
</dbReference>
<dbReference type="PANTHER" id="PTHR42894">
    <property type="entry name" value="N-(5'-PHOSPHORIBOSYL)ANTHRANILATE ISOMERASE"/>
    <property type="match status" value="1"/>
</dbReference>
<dbReference type="PANTHER" id="PTHR42894:SF1">
    <property type="entry name" value="N-(5'-PHOSPHORIBOSYL)ANTHRANILATE ISOMERASE"/>
    <property type="match status" value="1"/>
</dbReference>
<dbReference type="Pfam" id="PF00697">
    <property type="entry name" value="PRAI"/>
    <property type="match status" value="1"/>
</dbReference>
<dbReference type="SUPFAM" id="SSF51366">
    <property type="entry name" value="Ribulose-phoshate binding barrel"/>
    <property type="match status" value="1"/>
</dbReference>
<organism>
    <name type="scientific">Streptococcus pneumoniae (strain ATCC 700669 / Spain 23F-1)</name>
    <dbReference type="NCBI Taxonomy" id="561276"/>
    <lineage>
        <taxon>Bacteria</taxon>
        <taxon>Bacillati</taxon>
        <taxon>Bacillota</taxon>
        <taxon>Bacilli</taxon>
        <taxon>Lactobacillales</taxon>
        <taxon>Streptococcaceae</taxon>
        <taxon>Streptococcus</taxon>
    </lineage>
</organism>